<accession>P10282</accession>
<accession>O74124</accession>
<reference key="1">
    <citation type="journal article" date="1998" name="Biochem. Mol. Biol. Int.">
        <title>Cloning and sequencing of cDNA encoding ribonuclease F1 from Fusarium moniliforme.</title>
        <authorList>
            <person name="Yoshida H."/>
            <person name="Iizuka M."/>
            <person name="Norioka N."/>
            <person name="Norioka S."/>
            <person name="Sakiyama F."/>
        </authorList>
    </citation>
    <scope>NUCLEOTIDE SEQUENCE [MRNA]</scope>
</reference>
<reference key="2">
    <citation type="journal article" date="1983" name="Biochem. Int.">
        <title>The primary structure of ribonuclease F1 from Fusarium moniliforme.</title>
        <authorList>
            <person name="Hirabayashi J."/>
            <person name="Yoshida H."/>
        </authorList>
    </citation>
    <scope>PROTEIN SEQUENCE OF 26-131</scope>
    <scope>PYROGLUTAMATE FORMATION AT GLN-26</scope>
</reference>
<reference key="3">
    <citation type="journal article" date="1986" name="Anal. Biochem.">
        <title>Peptide fractionation by high-performance liquid chromatography on an Asahipak GS-320 column: application to determination of the disulfide pairings in ribonuclease F1.</title>
        <authorList>
            <person name="Yoshida H."/>
            <person name="Naijo S."/>
        </authorList>
    </citation>
    <scope>PROTEIN SEQUENCE OF 26-131</scope>
    <scope>DISULFIDE BONDS</scope>
</reference>
<reference key="4">
    <citation type="journal article" date="1993" name="J. Mol. Biol.">
        <title>Crystal structures of ribonuclease F1 of Fusarium moniliforme in its free form and in complex with 2'GMP.</title>
        <authorList>
            <person name="Vassylyev D.G."/>
            <person name="Katayanagi K."/>
            <person name="Ishikawa K."/>
            <person name="Tsujimoto-Hirano M."/>
            <person name="Danno M."/>
            <person name="Paehler A."/>
            <person name="Matsumoto O."/>
            <person name="Matsushima M."/>
            <person name="Yoshida H."/>
            <person name="Morikawa K."/>
        </authorList>
    </citation>
    <scope>X-RAY CRYSTALLOGRAPHY (1.3 ANGSTROMS) OF 26-131</scope>
</reference>
<reference key="5">
    <citation type="journal article" date="1992" name="Eur. J. Biochem.">
        <title>The three-dimensional structure of guanine-specific ribonuclease F1 in solution determined by NMR spectroscopy and distance geometry.</title>
        <authorList>
            <person name="Nakai T."/>
            <person name="Yoshikawa W."/>
            <person name="Nakamura H."/>
            <person name="Yoshida H."/>
        </authorList>
    </citation>
    <scope>STRUCTURE BY NMR OF 26-131</scope>
</reference>
<sequence>MLFFKSIASLAALVSLAVASPIESRQSATTCGSTNYSASQVRAAANAACQYYQNDDTAGSSTYPHTYNNYEGFDFPVDGPYQEFPIKSGGVYTGGSPGADRVVINTNCEYAGAITHTGASGNNFVGCSGTN</sequence>
<feature type="signal peptide" evidence="1 2">
    <location>
        <begin position="1"/>
        <end position="25"/>
    </location>
</feature>
<feature type="chain" id="PRO_0000030834" description="Guanyl-specific ribonuclease F1">
    <location>
        <begin position="26"/>
        <end position="131"/>
    </location>
</feature>
<feature type="active site">
    <location>
        <position position="65"/>
    </location>
</feature>
<feature type="active site" description="Proton acceptor">
    <location>
        <position position="83"/>
    </location>
</feature>
<feature type="active site" description="Proton donor">
    <location>
        <position position="116"/>
    </location>
</feature>
<feature type="modified residue" description="Pyrrolidone carboxylic acid" evidence="2">
    <location>
        <position position="26"/>
    </location>
</feature>
<feature type="disulfide bond" evidence="1">
    <location>
        <begin position="31"/>
        <end position="127"/>
    </location>
</feature>
<feature type="disulfide bond" evidence="1">
    <location>
        <begin position="49"/>
        <end position="108"/>
    </location>
</feature>
<feature type="sequence conflict" description="In Ref. 2; AA sequence and 3; AA sequence." evidence="3" ref="2 3">
    <original>T</original>
    <variation>S</variation>
    <location>
        <position position="57"/>
    </location>
</feature>
<feature type="sequence conflict" description="In Ref. 2; AA sequence and 3; AA sequence." evidence="3" ref="2 3">
    <original>S</original>
    <variation>T</variation>
    <location>
        <position position="61"/>
    </location>
</feature>
<feature type="sequence conflict" description="In Ref. 2; AA sequence." evidence="3" ref="2">
    <original>GTN</original>
    <variation>NTG</variation>
    <location>
        <begin position="129"/>
        <end position="131"/>
    </location>
</feature>
<feature type="strand" evidence="4">
    <location>
        <begin position="29"/>
        <end position="31"/>
    </location>
</feature>
<feature type="strand" evidence="4">
    <location>
        <begin position="34"/>
        <end position="36"/>
    </location>
</feature>
<feature type="helix" evidence="4">
    <location>
        <begin position="38"/>
        <end position="53"/>
    </location>
</feature>
<feature type="strand" evidence="4">
    <location>
        <begin position="64"/>
        <end position="67"/>
    </location>
</feature>
<feature type="strand" evidence="4">
    <location>
        <begin position="81"/>
        <end position="85"/>
    </location>
</feature>
<feature type="strand" evidence="6">
    <location>
        <begin position="88"/>
        <end position="91"/>
    </location>
</feature>
<feature type="strand" evidence="4">
    <location>
        <begin position="99"/>
        <end position="105"/>
    </location>
</feature>
<feature type="strand" evidence="6">
    <location>
        <begin position="106"/>
        <end position="108"/>
    </location>
</feature>
<feature type="strand" evidence="4">
    <location>
        <begin position="110"/>
        <end position="116"/>
    </location>
</feature>
<feature type="turn" evidence="5">
    <location>
        <begin position="120"/>
        <end position="122"/>
    </location>
</feature>
<organism>
    <name type="scientific">Fusarium fujikuroi</name>
    <name type="common">Bakanae and foot rot disease fungus</name>
    <name type="synonym">Gibberella fujikuroi</name>
    <dbReference type="NCBI Taxonomy" id="5127"/>
    <lineage>
        <taxon>Eukaryota</taxon>
        <taxon>Fungi</taxon>
        <taxon>Dikarya</taxon>
        <taxon>Ascomycota</taxon>
        <taxon>Pezizomycotina</taxon>
        <taxon>Sordariomycetes</taxon>
        <taxon>Hypocreomycetidae</taxon>
        <taxon>Hypocreales</taxon>
        <taxon>Nectriaceae</taxon>
        <taxon>Fusarium</taxon>
        <taxon>Fusarium fujikuroi species complex</taxon>
    </lineage>
</organism>
<evidence type="ECO:0000269" key="1">
    <source>
    </source>
</evidence>
<evidence type="ECO:0000269" key="2">
    <source>
    </source>
</evidence>
<evidence type="ECO:0000305" key="3"/>
<evidence type="ECO:0007829" key="4">
    <source>
        <dbReference type="PDB" id="1FUS"/>
    </source>
</evidence>
<evidence type="ECO:0007829" key="5">
    <source>
        <dbReference type="PDB" id="1RCK"/>
    </source>
</evidence>
<evidence type="ECO:0007829" key="6">
    <source>
        <dbReference type="PDB" id="1RCL"/>
    </source>
</evidence>
<keyword id="KW-0002">3D-structure</keyword>
<keyword id="KW-0903">Direct protein sequencing</keyword>
<keyword id="KW-1015">Disulfide bond</keyword>
<keyword id="KW-0255">Endonuclease</keyword>
<keyword id="KW-0378">Hydrolase</keyword>
<keyword id="KW-0456">Lyase</keyword>
<keyword id="KW-0540">Nuclease</keyword>
<keyword id="KW-0873">Pyrrolidone carboxylic acid</keyword>
<keyword id="KW-0732">Signal</keyword>
<protein>
    <recommendedName>
        <fullName>Guanyl-specific ribonuclease F1</fullName>
        <shortName>RNase F1</shortName>
        <ecNumber>4.6.1.24</ecNumber>
    </recommendedName>
</protein>
<comment type="catalytic activity">
    <reaction>
        <text>[RNA] containing guanosine + H2O = an [RNA fragment]-3'-guanosine-3'-phosphate + a 5'-hydroxy-ribonucleotide-3'-[RNA fragment].</text>
        <dbReference type="EC" id="4.6.1.24"/>
    </reaction>
</comment>
<comment type="similarity">
    <text evidence="3">Belongs to the ribonuclease N1/T1 family.</text>
</comment>
<dbReference type="EC" id="4.6.1.24"/>
<dbReference type="EMBL" id="AB006460">
    <property type="protein sequence ID" value="BAA31984.1"/>
    <property type="molecule type" value="mRNA"/>
</dbReference>
<dbReference type="PIR" id="JS0484">
    <property type="entry name" value="JS0484"/>
</dbReference>
<dbReference type="PDB" id="1FUS">
    <property type="method" value="X-ray"/>
    <property type="resolution" value="1.30 A"/>
    <property type="chains" value="A=27-131"/>
</dbReference>
<dbReference type="PDB" id="1FUT">
    <property type="method" value="X-ray"/>
    <property type="resolution" value="2.00 A"/>
    <property type="chains" value="A=27-131"/>
</dbReference>
<dbReference type="PDB" id="1RCK">
    <property type="method" value="NMR"/>
    <property type="chains" value="A=27-131"/>
</dbReference>
<dbReference type="PDB" id="1RCL">
    <property type="method" value="NMR"/>
    <property type="chains" value="A=27-131"/>
</dbReference>
<dbReference type="PDBsum" id="1FUS"/>
<dbReference type="PDBsum" id="1FUT"/>
<dbReference type="PDBsum" id="1RCK"/>
<dbReference type="PDBsum" id="1RCL"/>
<dbReference type="SMR" id="P10282"/>
<dbReference type="EvolutionaryTrace" id="P10282"/>
<dbReference type="GO" id="GO:0016829">
    <property type="term" value="F:lyase activity"/>
    <property type="evidence" value="ECO:0007669"/>
    <property type="project" value="UniProtKB-KW"/>
</dbReference>
<dbReference type="GO" id="GO:0046589">
    <property type="term" value="F:ribonuclease T1 activity"/>
    <property type="evidence" value="ECO:0007669"/>
    <property type="project" value="UniProtKB-EC"/>
</dbReference>
<dbReference type="GO" id="GO:0003723">
    <property type="term" value="F:RNA binding"/>
    <property type="evidence" value="ECO:0007669"/>
    <property type="project" value="InterPro"/>
</dbReference>
<dbReference type="GO" id="GO:0004521">
    <property type="term" value="F:RNA endonuclease activity"/>
    <property type="evidence" value="ECO:0007669"/>
    <property type="project" value="InterPro"/>
</dbReference>
<dbReference type="CDD" id="cd00606">
    <property type="entry name" value="fungal_RNase"/>
    <property type="match status" value="1"/>
</dbReference>
<dbReference type="Gene3D" id="3.10.450.30">
    <property type="entry name" value="Microbial ribonucleases"/>
    <property type="match status" value="1"/>
</dbReference>
<dbReference type="InterPro" id="IPR000026">
    <property type="entry name" value="N1-like"/>
</dbReference>
<dbReference type="InterPro" id="IPR016191">
    <property type="entry name" value="Ribonuclease/ribotoxin"/>
</dbReference>
<dbReference type="InterPro" id="IPR051386">
    <property type="entry name" value="Ribonuclease_N1/T1"/>
</dbReference>
<dbReference type="InterPro" id="IPR048269">
    <property type="entry name" value="RNase_U2"/>
</dbReference>
<dbReference type="PANTHER" id="PTHR42104">
    <property type="entry name" value="EXTRACELLULAR GUANYL-SPECIFIC RIBONUCLEASE RNTA (AFU_ORTHOLOGUE AFUA_4G03230)"/>
    <property type="match status" value="1"/>
</dbReference>
<dbReference type="PANTHER" id="PTHR42104:SF1">
    <property type="entry name" value="EXTRACELLULAR GUANYL-SPECIFIC RIBONUCLEASE RNTA (AFU_ORTHOLOGUE AFUA_4G03230)"/>
    <property type="match status" value="1"/>
</dbReference>
<dbReference type="Pfam" id="PF00545">
    <property type="entry name" value="Ribonuclease"/>
    <property type="match status" value="1"/>
</dbReference>
<dbReference type="PIRSF" id="PIRSF037430">
    <property type="entry name" value="RNase_U2"/>
    <property type="match status" value="1"/>
</dbReference>
<dbReference type="SUPFAM" id="SSF53933">
    <property type="entry name" value="Microbial ribonucleases"/>
    <property type="match status" value="1"/>
</dbReference>
<proteinExistence type="evidence at protein level"/>
<name>RNF1_FUSFU</name>